<gene>
    <name type="primary">Eif2b2</name>
</gene>
<reference key="1">
    <citation type="journal article" date="2005" name="Science">
        <title>The transcriptional landscape of the mammalian genome.</title>
        <authorList>
            <person name="Carninci P."/>
            <person name="Kasukawa T."/>
            <person name="Katayama S."/>
            <person name="Gough J."/>
            <person name="Frith M.C."/>
            <person name="Maeda N."/>
            <person name="Oyama R."/>
            <person name="Ravasi T."/>
            <person name="Lenhard B."/>
            <person name="Wells C."/>
            <person name="Kodzius R."/>
            <person name="Shimokawa K."/>
            <person name="Bajic V.B."/>
            <person name="Brenner S.E."/>
            <person name="Batalov S."/>
            <person name="Forrest A.R."/>
            <person name="Zavolan M."/>
            <person name="Davis M.J."/>
            <person name="Wilming L.G."/>
            <person name="Aidinis V."/>
            <person name="Allen J.E."/>
            <person name="Ambesi-Impiombato A."/>
            <person name="Apweiler R."/>
            <person name="Aturaliya R.N."/>
            <person name="Bailey T.L."/>
            <person name="Bansal M."/>
            <person name="Baxter L."/>
            <person name="Beisel K.W."/>
            <person name="Bersano T."/>
            <person name="Bono H."/>
            <person name="Chalk A.M."/>
            <person name="Chiu K.P."/>
            <person name="Choudhary V."/>
            <person name="Christoffels A."/>
            <person name="Clutterbuck D.R."/>
            <person name="Crowe M.L."/>
            <person name="Dalla E."/>
            <person name="Dalrymple B.P."/>
            <person name="de Bono B."/>
            <person name="Della Gatta G."/>
            <person name="di Bernardo D."/>
            <person name="Down T."/>
            <person name="Engstrom P."/>
            <person name="Fagiolini M."/>
            <person name="Faulkner G."/>
            <person name="Fletcher C.F."/>
            <person name="Fukushima T."/>
            <person name="Furuno M."/>
            <person name="Futaki S."/>
            <person name="Gariboldi M."/>
            <person name="Georgii-Hemming P."/>
            <person name="Gingeras T.R."/>
            <person name="Gojobori T."/>
            <person name="Green R.E."/>
            <person name="Gustincich S."/>
            <person name="Harbers M."/>
            <person name="Hayashi Y."/>
            <person name="Hensch T.K."/>
            <person name="Hirokawa N."/>
            <person name="Hill D."/>
            <person name="Huminiecki L."/>
            <person name="Iacono M."/>
            <person name="Ikeo K."/>
            <person name="Iwama A."/>
            <person name="Ishikawa T."/>
            <person name="Jakt M."/>
            <person name="Kanapin A."/>
            <person name="Katoh M."/>
            <person name="Kawasawa Y."/>
            <person name="Kelso J."/>
            <person name="Kitamura H."/>
            <person name="Kitano H."/>
            <person name="Kollias G."/>
            <person name="Krishnan S.P."/>
            <person name="Kruger A."/>
            <person name="Kummerfeld S.K."/>
            <person name="Kurochkin I.V."/>
            <person name="Lareau L.F."/>
            <person name="Lazarevic D."/>
            <person name="Lipovich L."/>
            <person name="Liu J."/>
            <person name="Liuni S."/>
            <person name="McWilliam S."/>
            <person name="Madan Babu M."/>
            <person name="Madera M."/>
            <person name="Marchionni L."/>
            <person name="Matsuda H."/>
            <person name="Matsuzawa S."/>
            <person name="Miki H."/>
            <person name="Mignone F."/>
            <person name="Miyake S."/>
            <person name="Morris K."/>
            <person name="Mottagui-Tabar S."/>
            <person name="Mulder N."/>
            <person name="Nakano N."/>
            <person name="Nakauchi H."/>
            <person name="Ng P."/>
            <person name="Nilsson R."/>
            <person name="Nishiguchi S."/>
            <person name="Nishikawa S."/>
            <person name="Nori F."/>
            <person name="Ohara O."/>
            <person name="Okazaki Y."/>
            <person name="Orlando V."/>
            <person name="Pang K.C."/>
            <person name="Pavan W.J."/>
            <person name="Pavesi G."/>
            <person name="Pesole G."/>
            <person name="Petrovsky N."/>
            <person name="Piazza S."/>
            <person name="Reed J."/>
            <person name="Reid J.F."/>
            <person name="Ring B.Z."/>
            <person name="Ringwald M."/>
            <person name="Rost B."/>
            <person name="Ruan Y."/>
            <person name="Salzberg S.L."/>
            <person name="Sandelin A."/>
            <person name="Schneider C."/>
            <person name="Schoenbach C."/>
            <person name="Sekiguchi K."/>
            <person name="Semple C.A."/>
            <person name="Seno S."/>
            <person name="Sessa L."/>
            <person name="Sheng Y."/>
            <person name="Shibata Y."/>
            <person name="Shimada H."/>
            <person name="Shimada K."/>
            <person name="Silva D."/>
            <person name="Sinclair B."/>
            <person name="Sperling S."/>
            <person name="Stupka E."/>
            <person name="Sugiura K."/>
            <person name="Sultana R."/>
            <person name="Takenaka Y."/>
            <person name="Taki K."/>
            <person name="Tammoja K."/>
            <person name="Tan S.L."/>
            <person name="Tang S."/>
            <person name="Taylor M.S."/>
            <person name="Tegner J."/>
            <person name="Teichmann S.A."/>
            <person name="Ueda H.R."/>
            <person name="van Nimwegen E."/>
            <person name="Verardo R."/>
            <person name="Wei C.L."/>
            <person name="Yagi K."/>
            <person name="Yamanishi H."/>
            <person name="Zabarovsky E."/>
            <person name="Zhu S."/>
            <person name="Zimmer A."/>
            <person name="Hide W."/>
            <person name="Bult C."/>
            <person name="Grimmond S.M."/>
            <person name="Teasdale R.D."/>
            <person name="Liu E.T."/>
            <person name="Brusic V."/>
            <person name="Quackenbush J."/>
            <person name="Wahlestedt C."/>
            <person name="Mattick J.S."/>
            <person name="Hume D.A."/>
            <person name="Kai C."/>
            <person name="Sasaki D."/>
            <person name="Tomaru Y."/>
            <person name="Fukuda S."/>
            <person name="Kanamori-Katayama M."/>
            <person name="Suzuki M."/>
            <person name="Aoki J."/>
            <person name="Arakawa T."/>
            <person name="Iida J."/>
            <person name="Imamura K."/>
            <person name="Itoh M."/>
            <person name="Kato T."/>
            <person name="Kawaji H."/>
            <person name="Kawagashira N."/>
            <person name="Kawashima T."/>
            <person name="Kojima M."/>
            <person name="Kondo S."/>
            <person name="Konno H."/>
            <person name="Nakano K."/>
            <person name="Ninomiya N."/>
            <person name="Nishio T."/>
            <person name="Okada M."/>
            <person name="Plessy C."/>
            <person name="Shibata K."/>
            <person name="Shiraki T."/>
            <person name="Suzuki S."/>
            <person name="Tagami M."/>
            <person name="Waki K."/>
            <person name="Watahiki A."/>
            <person name="Okamura-Oho Y."/>
            <person name="Suzuki H."/>
            <person name="Kawai J."/>
            <person name="Hayashizaki Y."/>
        </authorList>
    </citation>
    <scope>NUCLEOTIDE SEQUENCE [LARGE SCALE MRNA]</scope>
    <source>
        <strain>C57BL/6J</strain>
        <tissue>Spinal cord</tissue>
    </source>
</reference>
<reference key="2">
    <citation type="journal article" date="2004" name="Genome Res.">
        <title>The status, quality, and expansion of the NIH full-length cDNA project: the Mammalian Gene Collection (MGC).</title>
        <authorList>
            <consortium name="The MGC Project Team"/>
        </authorList>
    </citation>
    <scope>NUCLEOTIDE SEQUENCE [LARGE SCALE MRNA]</scope>
</reference>
<reference key="3">
    <citation type="journal article" date="2010" name="Cell">
        <title>A tissue-specific atlas of mouse protein phosphorylation and expression.</title>
        <authorList>
            <person name="Huttlin E.L."/>
            <person name="Jedrychowski M.P."/>
            <person name="Elias J.E."/>
            <person name="Goswami T."/>
            <person name="Rad R."/>
            <person name="Beausoleil S.A."/>
            <person name="Villen J."/>
            <person name="Haas W."/>
            <person name="Sowa M.E."/>
            <person name="Gygi S.P."/>
        </authorList>
    </citation>
    <scope>IDENTIFICATION BY MASS SPECTROMETRY [LARGE SCALE ANALYSIS]</scope>
    <source>
        <tissue>Brain</tissue>
        <tissue>Kidney</tissue>
        <tissue>Liver</tissue>
        <tissue>Lung</tissue>
        <tissue>Pancreas</tissue>
        <tissue>Spleen</tissue>
        <tissue>Testis</tissue>
    </source>
</reference>
<dbReference type="EMBL" id="AK049731">
    <property type="protein sequence ID" value="BAC33897.1"/>
    <property type="molecule type" value="mRNA"/>
</dbReference>
<dbReference type="EMBL" id="BC003326">
    <property type="protein sequence ID" value="AAH03326.1"/>
    <property type="molecule type" value="mRNA"/>
</dbReference>
<dbReference type="CCDS" id="CCDS26053.1"/>
<dbReference type="RefSeq" id="NP_663420.1">
    <property type="nucleotide sequence ID" value="NM_145445.4"/>
</dbReference>
<dbReference type="SMR" id="Q99LD9"/>
<dbReference type="BioGRID" id="229952">
    <property type="interactions" value="3"/>
</dbReference>
<dbReference type="FunCoup" id="Q99LD9">
    <property type="interactions" value="1726"/>
</dbReference>
<dbReference type="IntAct" id="Q99LD9">
    <property type="interactions" value="2"/>
</dbReference>
<dbReference type="MINT" id="Q99LD9"/>
<dbReference type="STRING" id="10090.ENSMUSP00000004910"/>
<dbReference type="iPTMnet" id="Q99LD9"/>
<dbReference type="PhosphoSitePlus" id="Q99LD9"/>
<dbReference type="SwissPalm" id="Q99LD9"/>
<dbReference type="PaxDb" id="10090-ENSMUSP00000004910"/>
<dbReference type="PeptideAtlas" id="Q99LD9"/>
<dbReference type="ProteomicsDB" id="277577"/>
<dbReference type="Pumba" id="Q99LD9"/>
<dbReference type="Antibodypedia" id="57">
    <property type="antibodies" value="182 antibodies from 30 providers"/>
</dbReference>
<dbReference type="DNASU" id="217715"/>
<dbReference type="Ensembl" id="ENSMUST00000004910.12">
    <property type="protein sequence ID" value="ENSMUSP00000004910.6"/>
    <property type="gene ID" value="ENSMUSG00000004788.12"/>
</dbReference>
<dbReference type="GeneID" id="217715"/>
<dbReference type="KEGG" id="mmu:217715"/>
<dbReference type="UCSC" id="uc007ogr.1">
    <property type="organism name" value="mouse"/>
</dbReference>
<dbReference type="AGR" id="MGI:2145118"/>
<dbReference type="CTD" id="8892"/>
<dbReference type="MGI" id="MGI:2145118">
    <property type="gene designation" value="Eif2b2"/>
</dbReference>
<dbReference type="VEuPathDB" id="HostDB:ENSMUSG00000004788"/>
<dbReference type="eggNOG" id="KOG1465">
    <property type="taxonomic scope" value="Eukaryota"/>
</dbReference>
<dbReference type="GeneTree" id="ENSGT00550000074908"/>
<dbReference type="HOGENOM" id="CLU_016218_4_3_1"/>
<dbReference type="InParanoid" id="Q99LD9"/>
<dbReference type="OMA" id="SHSCAVA"/>
<dbReference type="OrthoDB" id="269919at2759"/>
<dbReference type="PhylomeDB" id="Q99LD9"/>
<dbReference type="TreeFam" id="TF101506"/>
<dbReference type="Reactome" id="R-MMU-72731">
    <property type="pathway name" value="Recycling of eIF2:GDP"/>
</dbReference>
<dbReference type="BioGRID-ORCS" id="217715">
    <property type="hits" value="30 hits in 76 CRISPR screens"/>
</dbReference>
<dbReference type="ChiTaRS" id="Eif2b2">
    <property type="organism name" value="mouse"/>
</dbReference>
<dbReference type="PRO" id="PR:Q99LD9"/>
<dbReference type="Proteomes" id="UP000000589">
    <property type="component" value="Chromosome 12"/>
</dbReference>
<dbReference type="RNAct" id="Q99LD9">
    <property type="molecule type" value="protein"/>
</dbReference>
<dbReference type="Bgee" id="ENSMUSG00000004788">
    <property type="expression patterns" value="Expressed in metanephric mesenchyme and 272 other cell types or tissues"/>
</dbReference>
<dbReference type="ExpressionAtlas" id="Q99LD9">
    <property type="expression patterns" value="baseline and differential"/>
</dbReference>
<dbReference type="GO" id="GO:0005737">
    <property type="term" value="C:cytoplasm"/>
    <property type="evidence" value="ECO:0000250"/>
    <property type="project" value="UniProtKB"/>
</dbReference>
<dbReference type="GO" id="GO:0005829">
    <property type="term" value="C:cytosol"/>
    <property type="evidence" value="ECO:0007669"/>
    <property type="project" value="UniProtKB-SubCell"/>
</dbReference>
<dbReference type="GO" id="GO:0005851">
    <property type="term" value="C:eukaryotic translation initiation factor 2B complex"/>
    <property type="evidence" value="ECO:0000250"/>
    <property type="project" value="UniProtKB"/>
</dbReference>
<dbReference type="GO" id="GO:0005524">
    <property type="term" value="F:ATP binding"/>
    <property type="evidence" value="ECO:0000250"/>
    <property type="project" value="UniProtKB"/>
</dbReference>
<dbReference type="GO" id="GO:0005525">
    <property type="term" value="F:GTP binding"/>
    <property type="evidence" value="ECO:0000250"/>
    <property type="project" value="UniProtKB"/>
</dbReference>
<dbReference type="GO" id="GO:0005085">
    <property type="term" value="F:guanyl-nucleotide exchange factor activity"/>
    <property type="evidence" value="ECO:0000250"/>
    <property type="project" value="UniProtKB"/>
</dbReference>
<dbReference type="GO" id="GO:0003743">
    <property type="term" value="F:translation initiation factor activity"/>
    <property type="evidence" value="ECO:0007669"/>
    <property type="project" value="UniProtKB-KW"/>
</dbReference>
<dbReference type="GO" id="GO:0007417">
    <property type="term" value="P:central nervous system development"/>
    <property type="evidence" value="ECO:0000250"/>
    <property type="project" value="UniProtKB"/>
</dbReference>
<dbReference type="GO" id="GO:0002183">
    <property type="term" value="P:cytoplasmic translational initiation"/>
    <property type="evidence" value="ECO:0000250"/>
    <property type="project" value="UniProtKB"/>
</dbReference>
<dbReference type="GO" id="GO:0042552">
    <property type="term" value="P:myelination"/>
    <property type="evidence" value="ECO:0000250"/>
    <property type="project" value="UniProtKB"/>
</dbReference>
<dbReference type="GO" id="GO:0014003">
    <property type="term" value="P:oligodendrocyte development"/>
    <property type="evidence" value="ECO:0000250"/>
    <property type="project" value="UniProtKB"/>
</dbReference>
<dbReference type="GO" id="GO:0001541">
    <property type="term" value="P:ovarian follicle development"/>
    <property type="evidence" value="ECO:0000250"/>
    <property type="project" value="UniProtKB"/>
</dbReference>
<dbReference type="GO" id="GO:0050852">
    <property type="term" value="P:T cell receptor signaling pathway"/>
    <property type="evidence" value="ECO:0000250"/>
    <property type="project" value="UniProtKB"/>
</dbReference>
<dbReference type="GO" id="GO:0006413">
    <property type="term" value="P:translational initiation"/>
    <property type="evidence" value="ECO:0000250"/>
    <property type="project" value="UniProtKB"/>
</dbReference>
<dbReference type="FunFam" id="3.40.50.10470:FF:000004">
    <property type="entry name" value="Translation initiation factor eIF-2B subunit beta"/>
    <property type="match status" value="1"/>
</dbReference>
<dbReference type="Gene3D" id="3.40.50.10470">
    <property type="entry name" value="Translation initiation factor eif-2b, domain 2"/>
    <property type="match status" value="1"/>
</dbReference>
<dbReference type="InterPro" id="IPR051855">
    <property type="entry name" value="eIF2B_beta_subunit"/>
</dbReference>
<dbReference type="InterPro" id="IPR000649">
    <property type="entry name" value="IF-2B-related"/>
</dbReference>
<dbReference type="InterPro" id="IPR042529">
    <property type="entry name" value="IF_2B-like_C"/>
</dbReference>
<dbReference type="InterPro" id="IPR037171">
    <property type="entry name" value="NagB/RpiA_transferase-like"/>
</dbReference>
<dbReference type="PANTHER" id="PTHR45859">
    <property type="entry name" value="TRANSLATION INITIATION FACTOR EIF-2B SUBUNIT BETA"/>
    <property type="match status" value="1"/>
</dbReference>
<dbReference type="PANTHER" id="PTHR45859:SF1">
    <property type="entry name" value="TRANSLATION INITIATION FACTOR EIF-2B SUBUNIT BETA"/>
    <property type="match status" value="1"/>
</dbReference>
<dbReference type="Pfam" id="PF01008">
    <property type="entry name" value="IF-2B"/>
    <property type="match status" value="1"/>
</dbReference>
<dbReference type="SUPFAM" id="SSF100950">
    <property type="entry name" value="NagB/RpiA/CoA transferase-like"/>
    <property type="match status" value="1"/>
</dbReference>
<accession>Q99LD9</accession>
<comment type="function">
    <text evidence="1">Acts as a component of the translation initiation factor 2B (eIF2B) complex, which catalyzes the exchange of GDP for GTP on eukaryotic initiation factor 2 (eIF2) gamma subunit. Its guanine nucleotide exchange factor activity is repressed when bound to eIF2 complex phosphorylated on the alpha subunit, thereby limiting the amount of methionyl-initiator methionine tRNA available to the ribosome and consequently global translation is repressed.</text>
</comment>
<comment type="activity regulation">
    <text evidence="1">Activated by the chemical integrated stress response (ISR) inhibitor ISRIB which stimulates guanine nucleotide exchange factor activity for both phosphorylated and unphosphorylated eIF2.</text>
</comment>
<comment type="subunit">
    <text evidence="1">Component of the translation initiation factor 2B (eIF2B) complex which is a heterodecamer of two sets of five different subunits: alpha, beta, gamma, delta and epsilon. Subunits alpha, beta and delta comprise a regulatory subcomplex and subunits epsilon and gamma comprise a catalytic subcomplex. Within the complex, the hexameric regulatory complex resides at the center, with the two heterodimeric catalytic subcomplexes bound on opposite sides.</text>
</comment>
<comment type="subcellular location">
    <subcellularLocation>
        <location evidence="2">Cytoplasm</location>
        <location evidence="2">Cytosol</location>
    </subcellularLocation>
</comment>
<comment type="similarity">
    <text evidence="3">Belongs to the eIF-2B alpha/beta/delta subunits family.</text>
</comment>
<organism>
    <name type="scientific">Mus musculus</name>
    <name type="common">Mouse</name>
    <dbReference type="NCBI Taxonomy" id="10090"/>
    <lineage>
        <taxon>Eukaryota</taxon>
        <taxon>Metazoa</taxon>
        <taxon>Chordata</taxon>
        <taxon>Craniata</taxon>
        <taxon>Vertebrata</taxon>
        <taxon>Euteleostomi</taxon>
        <taxon>Mammalia</taxon>
        <taxon>Eutheria</taxon>
        <taxon>Euarchontoglires</taxon>
        <taxon>Glires</taxon>
        <taxon>Rodentia</taxon>
        <taxon>Myomorpha</taxon>
        <taxon>Muroidea</taxon>
        <taxon>Muridae</taxon>
        <taxon>Murinae</taxon>
        <taxon>Mus</taxon>
        <taxon>Mus</taxon>
    </lineage>
</organism>
<keyword id="KW-0963">Cytoplasm</keyword>
<keyword id="KW-0396">Initiation factor</keyword>
<keyword id="KW-0648">Protein biosynthesis</keyword>
<keyword id="KW-1185">Reference proteome</keyword>
<protein>
    <recommendedName>
        <fullName>Translation initiation factor eIF2B subunit beta</fullName>
    </recommendedName>
    <alternativeName>
        <fullName>eIF2B GDP-GTP exchange factor subunit beta</fullName>
    </alternativeName>
</protein>
<name>EI2BB_MOUSE</name>
<evidence type="ECO:0000250" key="1">
    <source>
        <dbReference type="UniProtKB" id="P49770"/>
    </source>
</evidence>
<evidence type="ECO:0000250" key="2">
    <source>
        <dbReference type="UniProtKB" id="Q9UT76"/>
    </source>
</evidence>
<evidence type="ECO:0000305" key="3"/>
<sequence length="351" mass="38898">MPGAAAKGSELSERIEGFVETLKRGGGQRSSEDMARETLGLLRRLITDHHWNNAGDLMDLIRREGRRMTAAQPSETTVGNMVRRVLKIIREEYGRLHGRSDESDQQESLHKLLTSGGLSEDFSFHFAPLKANIIEAINELLVELEGTMENIAAQALEHIHSNEVIMTIGYSRTVEAFLKEAARKRKFHVIVAECAPFCQGHEMAVNLSKEGIETTVMTDAAIFAVMSRVNKVIIGTKTILANGSLRAVAGTHTLALAAKHHSTPLIVCAPMFKLSPQFPSEEDSFHKFVAPEEVLPFTEGDILEKVSVHCPVFDYVPPDLITLFISNIGGNAPSYIYRLMSELYHPDDHVL</sequence>
<feature type="chain" id="PRO_0000156062" description="Translation initiation factor eIF2B subunit beta">
    <location>
        <begin position="1"/>
        <end position="351"/>
    </location>
</feature>
<proteinExistence type="evidence at protein level"/>